<feature type="chain" id="PRO_0000376546" description="Probable cell division protein WhiA">
    <location>
        <begin position="1"/>
        <end position="326"/>
    </location>
</feature>
<feature type="DNA-binding region" description="H-T-H motif" evidence="1">
    <location>
        <begin position="275"/>
        <end position="308"/>
    </location>
</feature>
<name>WHIA_RENSM</name>
<organism>
    <name type="scientific">Renibacterium salmoninarum (strain ATCC 33209 / DSM 20767 / JCM 11484 / NBRC 15589 / NCIMB 2235)</name>
    <dbReference type="NCBI Taxonomy" id="288705"/>
    <lineage>
        <taxon>Bacteria</taxon>
        <taxon>Bacillati</taxon>
        <taxon>Actinomycetota</taxon>
        <taxon>Actinomycetes</taxon>
        <taxon>Micrococcales</taxon>
        <taxon>Micrococcaceae</taxon>
        <taxon>Renibacterium</taxon>
    </lineage>
</organism>
<gene>
    <name evidence="1" type="primary">whiA</name>
    <name type="ordered locus">RSal33209_2273</name>
</gene>
<accession>A9WT66</accession>
<proteinExistence type="inferred from homology"/>
<keyword id="KW-0131">Cell cycle</keyword>
<keyword id="KW-0132">Cell division</keyword>
<keyword id="KW-0238">DNA-binding</keyword>
<keyword id="KW-1185">Reference proteome</keyword>
<sequence>MALTAAVKEELSRLEVRKSSVRKAEVSAMLRFAGGLHIISGRIVIEAEVDLAATARRVRVAIAELYGHQSEIIVVSGGGLRRGNRYVVRVVREGEALARQTGLLDSRGRPVRGLPSVVVNGSTADAEAVWRGAFLAHGSLTEPGRSSSMEVTCPGPEAALALVGSARRLGIAAKAREVRGVDRVVIRDGDTIAALLTRMGAHETLLVWEERRMRKEVRATANRLANFDDANLRRSAQAAVAAGARVDRALEILGDDVPEHLKYAGELRVAHKQASLDELGRLADPPMTKDAIAGRIRRLLAMADKRASDLGIPSTEANVTLEMLEE</sequence>
<comment type="function">
    <text evidence="1">Involved in cell division and chromosome segregation.</text>
</comment>
<comment type="similarity">
    <text evidence="1">Belongs to the WhiA family.</text>
</comment>
<reference key="1">
    <citation type="journal article" date="2008" name="J. Bacteriol.">
        <title>Genome sequence of the fish pathogen Renibacterium salmoninarum suggests reductive evolution away from an environmental Arthrobacter ancestor.</title>
        <authorList>
            <person name="Wiens G.D."/>
            <person name="Rockey D.D."/>
            <person name="Wu Z."/>
            <person name="Chang J."/>
            <person name="Levy R."/>
            <person name="Crane S."/>
            <person name="Chen D.S."/>
            <person name="Capri G.R."/>
            <person name="Burnett J.R."/>
            <person name="Sudheesh P.S."/>
            <person name="Schipma M.J."/>
            <person name="Burd H."/>
            <person name="Bhattacharyya A."/>
            <person name="Rhodes L.D."/>
            <person name="Kaul R."/>
            <person name="Strom M.S."/>
        </authorList>
    </citation>
    <scope>NUCLEOTIDE SEQUENCE [LARGE SCALE GENOMIC DNA]</scope>
    <source>
        <strain>ATCC 33209 / DSM 20767 / JCM 11484 / NBRC 15589 / NCIMB 2235</strain>
    </source>
</reference>
<protein>
    <recommendedName>
        <fullName evidence="1">Probable cell division protein WhiA</fullName>
    </recommendedName>
</protein>
<dbReference type="EMBL" id="CP000910">
    <property type="protein sequence ID" value="ABY24004.1"/>
    <property type="molecule type" value="Genomic_DNA"/>
</dbReference>
<dbReference type="RefSeq" id="WP_012245669.1">
    <property type="nucleotide sequence ID" value="NC_010168.1"/>
</dbReference>
<dbReference type="SMR" id="A9WT66"/>
<dbReference type="STRING" id="288705.RSal33209_2273"/>
<dbReference type="KEGG" id="rsa:RSal33209_2273"/>
<dbReference type="eggNOG" id="COG1481">
    <property type="taxonomic scope" value="Bacteria"/>
</dbReference>
<dbReference type="HOGENOM" id="CLU_053282_0_0_11"/>
<dbReference type="Proteomes" id="UP000002007">
    <property type="component" value="Chromosome"/>
</dbReference>
<dbReference type="GO" id="GO:0003677">
    <property type="term" value="F:DNA binding"/>
    <property type="evidence" value="ECO:0007669"/>
    <property type="project" value="UniProtKB-UniRule"/>
</dbReference>
<dbReference type="GO" id="GO:0051301">
    <property type="term" value="P:cell division"/>
    <property type="evidence" value="ECO:0007669"/>
    <property type="project" value="UniProtKB-UniRule"/>
</dbReference>
<dbReference type="GO" id="GO:0043937">
    <property type="term" value="P:regulation of sporulation"/>
    <property type="evidence" value="ECO:0007669"/>
    <property type="project" value="InterPro"/>
</dbReference>
<dbReference type="FunFam" id="3.10.28.10:FF:000001">
    <property type="entry name" value="Probable cell division protein WhiA"/>
    <property type="match status" value="1"/>
</dbReference>
<dbReference type="Gene3D" id="3.10.28.10">
    <property type="entry name" value="Homing endonucleases"/>
    <property type="match status" value="1"/>
</dbReference>
<dbReference type="HAMAP" id="MF_01420">
    <property type="entry name" value="HTH_type_WhiA"/>
    <property type="match status" value="1"/>
</dbReference>
<dbReference type="InterPro" id="IPR027434">
    <property type="entry name" value="Homing_endonucl"/>
</dbReference>
<dbReference type="InterPro" id="IPR018478">
    <property type="entry name" value="Sporu_reg_WhiA_N_dom"/>
</dbReference>
<dbReference type="InterPro" id="IPR003802">
    <property type="entry name" value="Sporulation_regulator_WhiA"/>
</dbReference>
<dbReference type="InterPro" id="IPR023054">
    <property type="entry name" value="Sporulation_regulator_WhiA_C"/>
</dbReference>
<dbReference type="InterPro" id="IPR039518">
    <property type="entry name" value="WhiA_LAGLIDADG_dom"/>
</dbReference>
<dbReference type="NCBIfam" id="TIGR00647">
    <property type="entry name" value="DNA_bind_WhiA"/>
    <property type="match status" value="1"/>
</dbReference>
<dbReference type="PANTHER" id="PTHR37307">
    <property type="entry name" value="CELL DIVISION PROTEIN WHIA-RELATED"/>
    <property type="match status" value="1"/>
</dbReference>
<dbReference type="PANTHER" id="PTHR37307:SF1">
    <property type="entry name" value="CELL DIVISION PROTEIN WHIA-RELATED"/>
    <property type="match status" value="1"/>
</dbReference>
<dbReference type="Pfam" id="PF02650">
    <property type="entry name" value="HTH_WhiA"/>
    <property type="match status" value="1"/>
</dbReference>
<dbReference type="Pfam" id="PF14527">
    <property type="entry name" value="LAGLIDADG_WhiA"/>
    <property type="match status" value="1"/>
</dbReference>
<dbReference type="Pfam" id="PF10298">
    <property type="entry name" value="WhiA_N"/>
    <property type="match status" value="1"/>
</dbReference>
<evidence type="ECO:0000255" key="1">
    <source>
        <dbReference type="HAMAP-Rule" id="MF_01420"/>
    </source>
</evidence>